<accession>O83253</accession>
<reference key="1">
    <citation type="journal article" date="1998" name="Science">
        <title>Complete genome sequence of Treponema pallidum, the syphilis spirochete.</title>
        <authorList>
            <person name="Fraser C.M."/>
            <person name="Norris S.J."/>
            <person name="Weinstock G.M."/>
            <person name="White O."/>
            <person name="Sutton G.G."/>
            <person name="Dodson R.J."/>
            <person name="Gwinn M.L."/>
            <person name="Hickey E.K."/>
            <person name="Clayton R.A."/>
            <person name="Ketchum K.A."/>
            <person name="Sodergren E."/>
            <person name="Hardham J.M."/>
            <person name="McLeod M.P."/>
            <person name="Salzberg S.L."/>
            <person name="Peterson J.D."/>
            <person name="Khalak H.G."/>
            <person name="Richardson D.L."/>
            <person name="Howell J.K."/>
            <person name="Chidambaram M."/>
            <person name="Utterback T.R."/>
            <person name="McDonald L.A."/>
            <person name="Artiach P."/>
            <person name="Bowman C."/>
            <person name="Cotton M.D."/>
            <person name="Fujii C."/>
            <person name="Garland S.A."/>
            <person name="Hatch B."/>
            <person name="Horst K."/>
            <person name="Roberts K.M."/>
            <person name="Sandusky M."/>
            <person name="Weidman J.F."/>
            <person name="Smith H.O."/>
            <person name="Venter J.C."/>
        </authorList>
    </citation>
    <scope>NUCLEOTIDE SEQUENCE [LARGE SCALE GENOMIC DNA]</scope>
    <source>
        <strain>Nichols</strain>
    </source>
</reference>
<feature type="chain" id="PRO_0000202214" description="Uncharacterized protein TP_0224">
    <location>
        <begin position="1"/>
        <end position="34"/>
    </location>
</feature>
<sequence length="34" mass="3830">MRISAGVLNFLKVDLFKGVRHACAPLVWDAYPLK</sequence>
<gene>
    <name type="ordered locus">TP_0224</name>
</gene>
<organism>
    <name type="scientific">Treponema pallidum (strain Nichols)</name>
    <dbReference type="NCBI Taxonomy" id="243276"/>
    <lineage>
        <taxon>Bacteria</taxon>
        <taxon>Pseudomonadati</taxon>
        <taxon>Spirochaetota</taxon>
        <taxon>Spirochaetia</taxon>
        <taxon>Spirochaetales</taxon>
        <taxon>Treponemataceae</taxon>
        <taxon>Treponema</taxon>
    </lineage>
</organism>
<keyword id="KW-1185">Reference proteome</keyword>
<protein>
    <recommendedName>
        <fullName>Uncharacterized protein TP_0224</fullName>
    </recommendedName>
</protein>
<name>Y224_TREPA</name>
<dbReference type="EMBL" id="AE000520">
    <property type="protein sequence ID" value="AAC65218.1"/>
    <property type="molecule type" value="Genomic_DNA"/>
</dbReference>
<dbReference type="PIR" id="F71350">
    <property type="entry name" value="F71350"/>
</dbReference>
<dbReference type="IntAct" id="O83253">
    <property type="interactions" value="4"/>
</dbReference>
<dbReference type="STRING" id="243276.TP_0224"/>
<dbReference type="EnsemblBacteria" id="AAC65218">
    <property type="protein sequence ID" value="AAC65218"/>
    <property type="gene ID" value="TP_0224"/>
</dbReference>
<dbReference type="KEGG" id="tpa:TP_0224"/>
<dbReference type="HOGENOM" id="CLU_3376607_0_0_12"/>
<dbReference type="Proteomes" id="UP000000811">
    <property type="component" value="Chromosome"/>
</dbReference>
<proteinExistence type="predicted"/>